<protein>
    <recommendedName>
        <fullName>NADH-ubiquinone oxidoreductase chain 4</fullName>
        <ecNumber evidence="1">7.1.1.2</ecNumber>
    </recommendedName>
    <alternativeName>
        <fullName>NADH dehydrogenase subunit 4</fullName>
    </alternativeName>
</protein>
<keyword id="KW-0249">Electron transport</keyword>
<keyword id="KW-0472">Membrane</keyword>
<keyword id="KW-0496">Mitochondrion</keyword>
<keyword id="KW-0999">Mitochondrion inner membrane</keyword>
<keyword id="KW-0520">NAD</keyword>
<keyword id="KW-0679">Respiratory chain</keyword>
<keyword id="KW-1278">Translocase</keyword>
<keyword id="KW-0812">Transmembrane</keyword>
<keyword id="KW-1133">Transmembrane helix</keyword>
<keyword id="KW-0813">Transport</keyword>
<keyword id="KW-0830">Ubiquinone</keyword>
<evidence type="ECO:0000250" key="1">
    <source>
        <dbReference type="UniProtKB" id="P03905"/>
    </source>
</evidence>
<evidence type="ECO:0000250" key="2">
    <source>
        <dbReference type="UniProtKB" id="P03910"/>
    </source>
</evidence>
<evidence type="ECO:0000255" key="3"/>
<evidence type="ECO:0000305" key="4"/>
<comment type="function">
    <text evidence="1">Core subunit of the mitochondrial membrane respiratory chain NADH dehydrogenase (Complex I) which catalyzes electron transfer from NADH through the respiratory chain, using ubiquinone as an electron acceptor. Essential for the catalytic activity and assembly of complex I.</text>
</comment>
<comment type="catalytic activity">
    <reaction evidence="1">
        <text>a ubiquinone + NADH + 5 H(+)(in) = a ubiquinol + NAD(+) + 4 H(+)(out)</text>
        <dbReference type="Rhea" id="RHEA:29091"/>
        <dbReference type="Rhea" id="RHEA-COMP:9565"/>
        <dbReference type="Rhea" id="RHEA-COMP:9566"/>
        <dbReference type="ChEBI" id="CHEBI:15378"/>
        <dbReference type="ChEBI" id="CHEBI:16389"/>
        <dbReference type="ChEBI" id="CHEBI:17976"/>
        <dbReference type="ChEBI" id="CHEBI:57540"/>
        <dbReference type="ChEBI" id="CHEBI:57945"/>
        <dbReference type="EC" id="7.1.1.2"/>
    </reaction>
</comment>
<comment type="subunit">
    <text evidence="2">Core subunit of respiratory chain NADH dehydrogenase (Complex I) which is composed of 45 different subunits.</text>
</comment>
<comment type="subcellular location">
    <subcellularLocation>
        <location evidence="2">Mitochondrion inner membrane</location>
        <topology evidence="3">Multi-pass membrane protein</topology>
    </subcellularLocation>
</comment>
<comment type="similarity">
    <text evidence="4">Belongs to the complex I subunit 4 family.</text>
</comment>
<dbReference type="EC" id="7.1.1.2" evidence="1"/>
<dbReference type="EMBL" id="DQ856113">
    <property type="protein sequence ID" value="ABI54997.1"/>
    <property type="molecule type" value="Genomic_DNA"/>
</dbReference>
<dbReference type="EMBL" id="DQ856114">
    <property type="protein sequence ID" value="ABI55001.1"/>
    <property type="molecule type" value="Genomic_DNA"/>
</dbReference>
<dbReference type="EMBL" id="DQ856115">
    <property type="protein sequence ID" value="ABI55005.1"/>
    <property type="molecule type" value="Genomic_DNA"/>
</dbReference>
<dbReference type="EMBL" id="DQ856116">
    <property type="protein sequence ID" value="ABI55009.1"/>
    <property type="molecule type" value="Genomic_DNA"/>
</dbReference>
<dbReference type="EMBL" id="DQ856117">
    <property type="protein sequence ID" value="ABI55013.1"/>
    <property type="molecule type" value="Genomic_DNA"/>
</dbReference>
<dbReference type="SMR" id="A8DQK9"/>
<dbReference type="GO" id="GO:0005743">
    <property type="term" value="C:mitochondrial inner membrane"/>
    <property type="evidence" value="ECO:0000250"/>
    <property type="project" value="UniProtKB"/>
</dbReference>
<dbReference type="GO" id="GO:0008137">
    <property type="term" value="F:NADH dehydrogenase (ubiquinone) activity"/>
    <property type="evidence" value="ECO:0000250"/>
    <property type="project" value="UniProtKB"/>
</dbReference>
<dbReference type="GO" id="GO:0048039">
    <property type="term" value="F:ubiquinone binding"/>
    <property type="evidence" value="ECO:0007669"/>
    <property type="project" value="TreeGrafter"/>
</dbReference>
<dbReference type="GO" id="GO:0015990">
    <property type="term" value="P:electron transport coupled proton transport"/>
    <property type="evidence" value="ECO:0007669"/>
    <property type="project" value="TreeGrafter"/>
</dbReference>
<dbReference type="GO" id="GO:0006120">
    <property type="term" value="P:mitochondrial electron transport, NADH to ubiquinone"/>
    <property type="evidence" value="ECO:0000250"/>
    <property type="project" value="UniProtKB"/>
</dbReference>
<dbReference type="GO" id="GO:0032981">
    <property type="term" value="P:mitochondrial respiratory chain complex I assembly"/>
    <property type="evidence" value="ECO:0000250"/>
    <property type="project" value="UniProtKB"/>
</dbReference>
<dbReference type="InterPro" id="IPR000260">
    <property type="entry name" value="NADH4_N"/>
</dbReference>
<dbReference type="InterPro" id="IPR010227">
    <property type="entry name" value="NADH_Q_OxRdtase_chainM/4"/>
</dbReference>
<dbReference type="InterPro" id="IPR003918">
    <property type="entry name" value="NADH_UbQ_OxRdtase"/>
</dbReference>
<dbReference type="InterPro" id="IPR001750">
    <property type="entry name" value="ND/Mrp_TM"/>
</dbReference>
<dbReference type="NCBIfam" id="TIGR01972">
    <property type="entry name" value="NDH_I_M"/>
    <property type="match status" value="1"/>
</dbReference>
<dbReference type="PANTHER" id="PTHR43507">
    <property type="entry name" value="NADH-UBIQUINONE OXIDOREDUCTASE CHAIN 4"/>
    <property type="match status" value="1"/>
</dbReference>
<dbReference type="PANTHER" id="PTHR43507:SF20">
    <property type="entry name" value="NADH-UBIQUINONE OXIDOREDUCTASE CHAIN 4"/>
    <property type="match status" value="1"/>
</dbReference>
<dbReference type="Pfam" id="PF01059">
    <property type="entry name" value="Oxidored_q5_N"/>
    <property type="match status" value="1"/>
</dbReference>
<dbReference type="Pfam" id="PF00361">
    <property type="entry name" value="Proton_antipo_M"/>
    <property type="match status" value="1"/>
</dbReference>
<dbReference type="PRINTS" id="PR01437">
    <property type="entry name" value="NUOXDRDTASE4"/>
</dbReference>
<feature type="chain" id="PRO_0000323384" description="NADH-ubiquinone oxidoreductase chain 4">
    <location>
        <begin position="1"/>
        <end position="459"/>
    </location>
</feature>
<feature type="transmembrane region" description="Helical" evidence="3">
    <location>
        <begin position="22"/>
        <end position="42"/>
    </location>
</feature>
<feature type="transmembrane region" description="Helical" evidence="3">
    <location>
        <begin position="60"/>
        <end position="80"/>
    </location>
</feature>
<feature type="transmembrane region" description="Helical" evidence="3">
    <location>
        <begin position="95"/>
        <end position="111"/>
    </location>
</feature>
<feature type="transmembrane region" description="Helical" evidence="3">
    <location>
        <begin position="113"/>
        <end position="133"/>
    </location>
</feature>
<feature type="transmembrane region" description="Helical" evidence="3">
    <location>
        <begin position="147"/>
        <end position="167"/>
    </location>
</feature>
<feature type="transmembrane region" description="Helical" evidence="3">
    <location>
        <begin position="194"/>
        <end position="214"/>
    </location>
</feature>
<feature type="transmembrane region" description="Helical" evidence="3">
    <location>
        <begin position="224"/>
        <end position="244"/>
    </location>
</feature>
<feature type="transmembrane region" description="Helical" evidence="3">
    <location>
        <begin position="257"/>
        <end position="277"/>
    </location>
</feature>
<feature type="transmembrane region" description="Helical" evidence="3">
    <location>
        <begin position="284"/>
        <end position="303"/>
    </location>
</feature>
<feature type="transmembrane region" description="Helical" evidence="3">
    <location>
        <begin position="308"/>
        <end position="330"/>
    </location>
</feature>
<feature type="transmembrane region" description="Helical" evidence="3">
    <location>
        <begin position="342"/>
        <end position="362"/>
    </location>
</feature>
<feature type="transmembrane region" description="Helical" evidence="3">
    <location>
        <begin position="391"/>
        <end position="411"/>
    </location>
</feature>
<feature type="sequence variant" description="In strain: Isolate BEMA8.">
    <original>K</original>
    <variation>N</variation>
    <location>
        <position position="19"/>
    </location>
</feature>
<proteinExistence type="inferred from homology"/>
<gene>
    <name type="primary">MT-ND4</name>
    <name type="synonym">MTND4</name>
    <name type="synonym">NADH4</name>
    <name type="synonym">ND4</name>
</gene>
<accession>A8DQK9</accession>
<accession>A8DQK5</accession>
<geneLocation type="mitochondrion"/>
<sequence>MLKIIIPTIMLFPVTWYSKNSMIWINTTSHSLMISLMGLLLLNHPSNNSNNFSLNFFSDPLSSPLLMLTMWLLPLMIMASQHHLAKEPWFRKKSYLSMLITLQMFLIMTFMATELILFYILFEATLIPTLIIITRWGNQTERLNAGMYFLFYTLTGSLPLLVALIYLQSSMGSLNLLTINLWLKELPNSWSTNLLWMACIMAFMVKMPLYGLHLWLPKAHVEAPIAGSMVLAAVLLKLGGYGMMRITIILDPTTKSMAYPFLMLCLWGMIMTSSICLRQTDLKSLIAYSSVSHMALVIVAILVQTPLGFMGATALMIAHGLTSSMLFCLANSNYERIHSRTMLMARGLQTLLPLMTTWWLLASLNNLALPPSINLIGELLVTITSFSWSNITVILIGLNMLITALYSLYMLITTQRGKLTYYLHNLNPSLTRENTLMSMHMLPLLFLTLNPKIILGPTF</sequence>
<organism>
    <name type="scientific">Avahi cleesei</name>
    <name type="common">Cleese's woolly lemur</name>
    <name type="synonym">Bemaraha woolly lemur</name>
    <dbReference type="NCBI Taxonomy" id="402244"/>
    <lineage>
        <taxon>Eukaryota</taxon>
        <taxon>Metazoa</taxon>
        <taxon>Chordata</taxon>
        <taxon>Craniata</taxon>
        <taxon>Vertebrata</taxon>
        <taxon>Euteleostomi</taxon>
        <taxon>Mammalia</taxon>
        <taxon>Eutheria</taxon>
        <taxon>Euarchontoglires</taxon>
        <taxon>Primates</taxon>
        <taxon>Strepsirrhini</taxon>
        <taxon>Lemuriformes</taxon>
        <taxon>Indriidae</taxon>
        <taxon>Avahi</taxon>
    </lineage>
</organism>
<name>NU4M_AVACL</name>
<reference key="1">
    <citation type="journal article" date="2007" name="Spec. Publ. Mus. Tex. Tech. Univ.">
        <title>Molecular phylogeny and taxonomic revision of the woolly lemurs, genus Avahi (primates: lemuriformes).</title>
        <authorList>
            <person name="Andriantompohavana R."/>
            <person name="Lei R."/>
            <person name="Zaonarivelo J.R."/>
            <person name="Engberg S.E."/>
            <person name="Nalanirina G."/>
            <person name="McGuire S.M."/>
            <person name="Shore G.D."/>
            <person name="Andrianasolo J."/>
            <person name="Herrington K."/>
            <person name="Brenneman R.A."/>
            <person name="Louis E.E. Jr."/>
        </authorList>
    </citation>
    <scope>NUCLEOTIDE SEQUENCE [GENOMIC DNA]</scope>
    <source>
        <strain>Isolate BEMA12</strain>
        <strain>Isolate BEMA13</strain>
        <strain>Isolate BEMA14</strain>
        <strain>Isolate BEMA8</strain>
        <strain>Isolate BEMA9</strain>
    </source>
</reference>